<gene>
    <name evidence="1" type="primary">hemC</name>
    <name type="ordered locus">MRA_0517</name>
</gene>
<keyword id="KW-0627">Porphyrin biosynthesis</keyword>
<keyword id="KW-1185">Reference proteome</keyword>
<keyword id="KW-0808">Transferase</keyword>
<protein>
    <recommendedName>
        <fullName evidence="1">Porphobilinogen deaminase</fullName>
        <shortName evidence="1">PBG</shortName>
        <ecNumber evidence="1">2.5.1.61</ecNumber>
    </recommendedName>
    <alternativeName>
        <fullName evidence="1">Hydroxymethylbilane synthase</fullName>
        <shortName evidence="1">HMBS</shortName>
    </alternativeName>
    <alternativeName>
        <fullName evidence="1">Pre-uroporphyrinogen synthase</fullName>
    </alternativeName>
</protein>
<sequence>MIRIGTRGSLLATTQAATVRDALIAGGHSAELVTISTEGDRSMAPIASLGVGVFTTALREAMEAGLVDAAVHSYKDLPTAADPRFTVAAIPPRNDPRDAVVARDGLTLGELPVGSLVGTSSPRRAAQLRALGLGLEIRPLRGNLDTRLNKVSSGDLDAIVVARAGLARLGRLDDVTETLEPVQMLPAPAQGALAVECRAGDSRLVAVLAELDDADTRAAVTAERALLADLEAGCSAPVGAIAEVVESIDEDGRVFEELSLRGCVAALDGSDVIRASGIGSCGRARELGLSVAAELFELGARELMWGVRH</sequence>
<name>HEM3_MYCTA</name>
<accession>A5TZP0</accession>
<feature type="chain" id="PRO_0000304252" description="Porphobilinogen deaminase">
    <location>
        <begin position="1"/>
        <end position="309"/>
    </location>
</feature>
<feature type="modified residue" description="S-(dipyrrolylmethanemethyl)cysteine" evidence="1">
    <location>
        <position position="234"/>
    </location>
</feature>
<evidence type="ECO:0000255" key="1">
    <source>
        <dbReference type="HAMAP-Rule" id="MF_00260"/>
    </source>
</evidence>
<organism>
    <name type="scientific">Mycobacterium tuberculosis (strain ATCC 25177 / H37Ra)</name>
    <dbReference type="NCBI Taxonomy" id="419947"/>
    <lineage>
        <taxon>Bacteria</taxon>
        <taxon>Bacillati</taxon>
        <taxon>Actinomycetota</taxon>
        <taxon>Actinomycetes</taxon>
        <taxon>Mycobacteriales</taxon>
        <taxon>Mycobacteriaceae</taxon>
        <taxon>Mycobacterium</taxon>
        <taxon>Mycobacterium tuberculosis complex</taxon>
    </lineage>
</organism>
<comment type="function">
    <text evidence="1">Tetrapolymerization of the monopyrrole PBG into the hydroxymethylbilane pre-uroporphyrinogen in several discrete steps.</text>
</comment>
<comment type="catalytic activity">
    <reaction evidence="1">
        <text>4 porphobilinogen + H2O = hydroxymethylbilane + 4 NH4(+)</text>
        <dbReference type="Rhea" id="RHEA:13185"/>
        <dbReference type="ChEBI" id="CHEBI:15377"/>
        <dbReference type="ChEBI" id="CHEBI:28938"/>
        <dbReference type="ChEBI" id="CHEBI:57845"/>
        <dbReference type="ChEBI" id="CHEBI:58126"/>
        <dbReference type="EC" id="2.5.1.61"/>
    </reaction>
</comment>
<comment type="cofactor">
    <cofactor evidence="1">
        <name>dipyrromethane</name>
        <dbReference type="ChEBI" id="CHEBI:60342"/>
    </cofactor>
    <text evidence="1">Binds 1 dipyrromethane group covalently.</text>
</comment>
<comment type="pathway">
    <text evidence="1">Porphyrin-containing compound metabolism; protoporphyrin-IX biosynthesis; coproporphyrinogen-III from 5-aminolevulinate: step 2/4.</text>
</comment>
<comment type="subunit">
    <text evidence="1">Monomer.</text>
</comment>
<comment type="miscellaneous">
    <text evidence="1">The porphobilinogen subunits are added to the dipyrromethane group.</text>
</comment>
<comment type="similarity">
    <text evidence="1">Belongs to the HMBS family.</text>
</comment>
<reference key="1">
    <citation type="journal article" date="2008" name="PLoS ONE">
        <title>Genetic basis of virulence attenuation revealed by comparative genomic analysis of Mycobacterium tuberculosis strain H37Ra versus H37Rv.</title>
        <authorList>
            <person name="Zheng H."/>
            <person name="Lu L."/>
            <person name="Wang B."/>
            <person name="Pu S."/>
            <person name="Zhang X."/>
            <person name="Zhu G."/>
            <person name="Shi W."/>
            <person name="Zhang L."/>
            <person name="Wang H."/>
            <person name="Wang S."/>
            <person name="Zhao G."/>
            <person name="Zhang Y."/>
        </authorList>
    </citation>
    <scope>NUCLEOTIDE SEQUENCE [LARGE SCALE GENOMIC DNA]</scope>
    <source>
        <strain>ATCC 25177 / H37Ra</strain>
    </source>
</reference>
<dbReference type="EC" id="2.5.1.61" evidence="1"/>
<dbReference type="EMBL" id="CP000611">
    <property type="protein sequence ID" value="ABQ72240.1"/>
    <property type="molecule type" value="Genomic_DNA"/>
</dbReference>
<dbReference type="RefSeq" id="WP_003402702.1">
    <property type="nucleotide sequence ID" value="NZ_CP016972.1"/>
</dbReference>
<dbReference type="SMR" id="A5TZP0"/>
<dbReference type="KEGG" id="mra:MRA_0517"/>
<dbReference type="eggNOG" id="COG0181">
    <property type="taxonomic scope" value="Bacteria"/>
</dbReference>
<dbReference type="HOGENOM" id="CLU_019704_1_0_11"/>
<dbReference type="UniPathway" id="UPA00251">
    <property type="reaction ID" value="UER00319"/>
</dbReference>
<dbReference type="Proteomes" id="UP000001988">
    <property type="component" value="Chromosome"/>
</dbReference>
<dbReference type="GO" id="GO:0005737">
    <property type="term" value="C:cytoplasm"/>
    <property type="evidence" value="ECO:0007669"/>
    <property type="project" value="TreeGrafter"/>
</dbReference>
<dbReference type="GO" id="GO:0004418">
    <property type="term" value="F:hydroxymethylbilane synthase activity"/>
    <property type="evidence" value="ECO:0007669"/>
    <property type="project" value="UniProtKB-UniRule"/>
</dbReference>
<dbReference type="GO" id="GO:0006782">
    <property type="term" value="P:protoporphyrinogen IX biosynthetic process"/>
    <property type="evidence" value="ECO:0007669"/>
    <property type="project" value="UniProtKB-UniRule"/>
</dbReference>
<dbReference type="CDD" id="cd13646">
    <property type="entry name" value="PBP2_EcHMBS_like"/>
    <property type="match status" value="1"/>
</dbReference>
<dbReference type="FunFam" id="3.30.160.40:FF:000001">
    <property type="entry name" value="Porphobilinogen deaminase"/>
    <property type="match status" value="1"/>
</dbReference>
<dbReference type="FunFam" id="3.40.190.10:FF:000005">
    <property type="entry name" value="Porphobilinogen deaminase"/>
    <property type="match status" value="1"/>
</dbReference>
<dbReference type="Gene3D" id="3.40.190.10">
    <property type="entry name" value="Periplasmic binding protein-like II"/>
    <property type="match status" value="2"/>
</dbReference>
<dbReference type="Gene3D" id="3.30.160.40">
    <property type="entry name" value="Porphobilinogen deaminase, C-terminal domain"/>
    <property type="match status" value="1"/>
</dbReference>
<dbReference type="HAMAP" id="MF_00260">
    <property type="entry name" value="Porphobil_deam"/>
    <property type="match status" value="1"/>
</dbReference>
<dbReference type="InterPro" id="IPR000860">
    <property type="entry name" value="HemC"/>
</dbReference>
<dbReference type="InterPro" id="IPR022419">
    <property type="entry name" value="Porphobilin_deaminase_cofac_BS"/>
</dbReference>
<dbReference type="InterPro" id="IPR022417">
    <property type="entry name" value="Porphobilin_deaminase_N"/>
</dbReference>
<dbReference type="InterPro" id="IPR022418">
    <property type="entry name" value="Porphobilinogen_deaminase_C"/>
</dbReference>
<dbReference type="InterPro" id="IPR036803">
    <property type="entry name" value="Porphobilinogen_deaminase_C_sf"/>
</dbReference>
<dbReference type="NCBIfam" id="TIGR00212">
    <property type="entry name" value="hemC"/>
    <property type="match status" value="1"/>
</dbReference>
<dbReference type="PANTHER" id="PTHR11557">
    <property type="entry name" value="PORPHOBILINOGEN DEAMINASE"/>
    <property type="match status" value="1"/>
</dbReference>
<dbReference type="PANTHER" id="PTHR11557:SF0">
    <property type="entry name" value="PORPHOBILINOGEN DEAMINASE"/>
    <property type="match status" value="1"/>
</dbReference>
<dbReference type="Pfam" id="PF01379">
    <property type="entry name" value="Porphobil_deam"/>
    <property type="match status" value="1"/>
</dbReference>
<dbReference type="Pfam" id="PF03900">
    <property type="entry name" value="Porphobil_deamC"/>
    <property type="match status" value="1"/>
</dbReference>
<dbReference type="PIRSF" id="PIRSF001438">
    <property type="entry name" value="4pyrrol_synth_OHMeBilane_synth"/>
    <property type="match status" value="1"/>
</dbReference>
<dbReference type="PRINTS" id="PR00151">
    <property type="entry name" value="PORPHBDMNASE"/>
</dbReference>
<dbReference type="SUPFAM" id="SSF53850">
    <property type="entry name" value="Periplasmic binding protein-like II"/>
    <property type="match status" value="1"/>
</dbReference>
<dbReference type="SUPFAM" id="SSF54782">
    <property type="entry name" value="Porphobilinogen deaminase (hydroxymethylbilane synthase), C-terminal domain"/>
    <property type="match status" value="1"/>
</dbReference>
<dbReference type="PROSITE" id="PS00533">
    <property type="entry name" value="PORPHOBILINOGEN_DEAM"/>
    <property type="match status" value="1"/>
</dbReference>
<proteinExistence type="inferred from homology"/>